<reference key="1">
    <citation type="journal article" date="2008" name="J. Bacteriol.">
        <title>The complete genome sequence of Thermococcus onnurineus NA1 reveals a mixed heterotrophic and carboxydotrophic metabolism.</title>
        <authorList>
            <person name="Lee H.S."/>
            <person name="Kang S.G."/>
            <person name="Bae S.S."/>
            <person name="Lim J.K."/>
            <person name="Cho Y."/>
            <person name="Kim Y.J."/>
            <person name="Jeon J.H."/>
            <person name="Cha S.-S."/>
            <person name="Kwon K.K."/>
            <person name="Kim H.-T."/>
            <person name="Park C.-J."/>
            <person name="Lee H.-W."/>
            <person name="Kim S.I."/>
            <person name="Chun J."/>
            <person name="Colwell R.R."/>
            <person name="Kim S.-J."/>
            <person name="Lee J.-H."/>
        </authorList>
    </citation>
    <scope>NUCLEOTIDE SEQUENCE [LARGE SCALE GENOMIC DNA]</scope>
    <source>
        <strain>NA1</strain>
    </source>
</reference>
<comment type="function">
    <text evidence="1">This is one of the proteins that bind and probably mediate the attachment of the 5S RNA into the large ribosomal subunit, where it forms part of the central protuberance.</text>
</comment>
<comment type="subunit">
    <text evidence="1">Part of the 50S ribosomal subunit. Contacts the 5S and 23S rRNAs.</text>
</comment>
<comment type="similarity">
    <text evidence="1">Belongs to the universal ribosomal protein uL18 family.</text>
</comment>
<protein>
    <recommendedName>
        <fullName evidence="1">Large ribosomal subunit protein uL18</fullName>
    </recommendedName>
    <alternativeName>
        <fullName evidence="2">50S ribosomal protein L18</fullName>
    </alternativeName>
</protein>
<gene>
    <name evidence="1" type="primary">rpl18</name>
    <name type="ordered locus">TON_0085</name>
</gene>
<name>RL18_THEON</name>
<proteinExistence type="inferred from homology"/>
<organism>
    <name type="scientific">Thermococcus onnurineus (strain NA1)</name>
    <dbReference type="NCBI Taxonomy" id="523850"/>
    <lineage>
        <taxon>Archaea</taxon>
        <taxon>Methanobacteriati</taxon>
        <taxon>Methanobacteriota</taxon>
        <taxon>Thermococci</taxon>
        <taxon>Thermococcales</taxon>
        <taxon>Thermococcaceae</taxon>
        <taxon>Thermococcus</taxon>
    </lineage>
</organism>
<evidence type="ECO:0000255" key="1">
    <source>
        <dbReference type="HAMAP-Rule" id="MF_01337"/>
    </source>
</evidence>
<evidence type="ECO:0000305" key="2"/>
<sequence>MAHGPRYRVPFRRRREGKTNYHKRLALLKSGKPRLVVRKSLNHHIAQIVVYDPKGDKTIVSAHTRELMRDFGWKGHGGNTPSAYLLGLLIGYKAKKAGIDEAILDIGLHPPTRGSSVFAVLKGAVDAGLNVPHSEEIYPEDYRITGEHIANYAKALKEEDEGKYRKQFSSYLVKGLEPEKLPEHFEEVKARIIEKFEEARE</sequence>
<keyword id="KW-0687">Ribonucleoprotein</keyword>
<keyword id="KW-0689">Ribosomal protein</keyword>
<keyword id="KW-0694">RNA-binding</keyword>
<keyword id="KW-0699">rRNA-binding</keyword>
<accession>B6YSN3</accession>
<feature type="chain" id="PRO_1000142730" description="Large ribosomal subunit protein uL18">
    <location>
        <begin position="1"/>
        <end position="201"/>
    </location>
</feature>
<dbReference type="EMBL" id="CP000855">
    <property type="protein sequence ID" value="ACJ15570.1"/>
    <property type="molecule type" value="Genomic_DNA"/>
</dbReference>
<dbReference type="RefSeq" id="WP_012571043.1">
    <property type="nucleotide sequence ID" value="NC_011529.1"/>
</dbReference>
<dbReference type="SMR" id="B6YSN3"/>
<dbReference type="STRING" id="523850.TON_0085"/>
<dbReference type="GeneID" id="7017732"/>
<dbReference type="KEGG" id="ton:TON_0085"/>
<dbReference type="PATRIC" id="fig|523850.10.peg.85"/>
<dbReference type="eggNOG" id="arCOG04088">
    <property type="taxonomic scope" value="Archaea"/>
</dbReference>
<dbReference type="HOGENOM" id="CLU_056222_2_0_2"/>
<dbReference type="OrthoDB" id="8644at2157"/>
<dbReference type="Proteomes" id="UP000002727">
    <property type="component" value="Chromosome"/>
</dbReference>
<dbReference type="GO" id="GO:0022625">
    <property type="term" value="C:cytosolic large ribosomal subunit"/>
    <property type="evidence" value="ECO:0007669"/>
    <property type="project" value="TreeGrafter"/>
</dbReference>
<dbReference type="GO" id="GO:0008097">
    <property type="term" value="F:5S rRNA binding"/>
    <property type="evidence" value="ECO:0007669"/>
    <property type="project" value="InterPro"/>
</dbReference>
<dbReference type="GO" id="GO:0003735">
    <property type="term" value="F:structural constituent of ribosome"/>
    <property type="evidence" value="ECO:0007669"/>
    <property type="project" value="InterPro"/>
</dbReference>
<dbReference type="GO" id="GO:0000027">
    <property type="term" value="P:ribosomal large subunit assembly"/>
    <property type="evidence" value="ECO:0007669"/>
    <property type="project" value="TreeGrafter"/>
</dbReference>
<dbReference type="GO" id="GO:0006412">
    <property type="term" value="P:translation"/>
    <property type="evidence" value="ECO:0007669"/>
    <property type="project" value="UniProtKB-UniRule"/>
</dbReference>
<dbReference type="CDD" id="cd00432">
    <property type="entry name" value="Ribosomal_L18_L5e"/>
    <property type="match status" value="1"/>
</dbReference>
<dbReference type="FunFam" id="3.30.420.100:FF:000008">
    <property type="entry name" value="50S ribosomal protein L18"/>
    <property type="match status" value="1"/>
</dbReference>
<dbReference type="Gene3D" id="3.30.420.100">
    <property type="match status" value="1"/>
</dbReference>
<dbReference type="HAMAP" id="MF_01337_A">
    <property type="entry name" value="Ribosomal_uL18_A"/>
    <property type="match status" value="1"/>
</dbReference>
<dbReference type="InterPro" id="IPR005485">
    <property type="entry name" value="Rbsml_uL18_euk"/>
</dbReference>
<dbReference type="NCBIfam" id="NF006342">
    <property type="entry name" value="PRK08569.1"/>
    <property type="match status" value="1"/>
</dbReference>
<dbReference type="PANTHER" id="PTHR23410:SF12">
    <property type="entry name" value="LARGE RIBOSOMAL SUBUNIT PROTEIN UL18"/>
    <property type="match status" value="1"/>
</dbReference>
<dbReference type="PANTHER" id="PTHR23410">
    <property type="entry name" value="RIBOSOMAL PROTEIN L5-RELATED"/>
    <property type="match status" value="1"/>
</dbReference>
<dbReference type="Pfam" id="PF17144">
    <property type="entry name" value="Ribosomal_L5e"/>
    <property type="match status" value="2"/>
</dbReference>
<dbReference type="PRINTS" id="PR00058">
    <property type="entry name" value="RIBOSOMALL5"/>
</dbReference>
<dbReference type="SUPFAM" id="SSF53137">
    <property type="entry name" value="Translational machinery components"/>
    <property type="match status" value="1"/>
</dbReference>